<evidence type="ECO:0000250" key="1">
    <source>
        <dbReference type="UniProtKB" id="P18852"/>
    </source>
</evidence>
<evidence type="ECO:0000256" key="2">
    <source>
        <dbReference type="SAM" id="MobiDB-lite"/>
    </source>
</evidence>
<evidence type="ECO:0000269" key="3">
    <source>
    </source>
</evidence>
<evidence type="ECO:0000269" key="4">
    <source>
    </source>
</evidence>
<evidence type="ECO:0000305" key="5"/>
<evidence type="ECO:0000305" key="6">
    <source>
    </source>
</evidence>
<feature type="chain" id="PRO_0000194810" description="Guanine nucleotide-binding protein subunit gamma">
    <location>
        <begin position="1"/>
        <end position="69"/>
    </location>
</feature>
<feature type="propeptide" id="PRO_0000396773" description="Removed in mature form" evidence="5">
    <location>
        <begin position="70"/>
        <end position="72"/>
    </location>
</feature>
<feature type="region of interest" description="Disordered" evidence="2">
    <location>
        <begin position="32"/>
        <end position="72"/>
    </location>
</feature>
<feature type="modified residue" description="Cysteine methyl ester" evidence="1">
    <location>
        <position position="69"/>
    </location>
</feature>
<feature type="lipid moiety-binding region" description="S-palmitoyl cysteine" evidence="1">
    <location>
        <position position="68"/>
    </location>
</feature>
<feature type="lipid moiety-binding region" description="S-farnesyl cysteine" evidence="1">
    <location>
        <position position="69"/>
    </location>
</feature>
<gene>
    <name type="primary">git11</name>
    <name type="ORF">SPBC215.04</name>
</gene>
<organism>
    <name type="scientific">Schizosaccharomyces pombe (strain 972 / ATCC 24843)</name>
    <name type="common">Fission yeast</name>
    <dbReference type="NCBI Taxonomy" id="284812"/>
    <lineage>
        <taxon>Eukaryota</taxon>
        <taxon>Fungi</taxon>
        <taxon>Dikarya</taxon>
        <taxon>Ascomycota</taxon>
        <taxon>Taphrinomycotina</taxon>
        <taxon>Schizosaccharomycetes</taxon>
        <taxon>Schizosaccharomycetales</taxon>
        <taxon>Schizosaccharomycetaceae</taxon>
        <taxon>Schizosaccharomyces</taxon>
    </lineage>
</organism>
<reference key="1">
    <citation type="journal article" date="2002" name="Nature">
        <title>The genome sequence of Schizosaccharomyces pombe.</title>
        <authorList>
            <person name="Wood V."/>
            <person name="Gwilliam R."/>
            <person name="Rajandream M.A."/>
            <person name="Lyne M.H."/>
            <person name="Lyne R."/>
            <person name="Stewart A."/>
            <person name="Sgouros J.G."/>
            <person name="Peat N."/>
            <person name="Hayles J."/>
            <person name="Baker S.G."/>
            <person name="Basham D."/>
            <person name="Bowman S."/>
            <person name="Brooks K."/>
            <person name="Brown D."/>
            <person name="Brown S."/>
            <person name="Chillingworth T."/>
            <person name="Churcher C.M."/>
            <person name="Collins M."/>
            <person name="Connor R."/>
            <person name="Cronin A."/>
            <person name="Davis P."/>
            <person name="Feltwell T."/>
            <person name="Fraser A."/>
            <person name="Gentles S."/>
            <person name="Goble A."/>
            <person name="Hamlin N."/>
            <person name="Harris D.E."/>
            <person name="Hidalgo J."/>
            <person name="Hodgson G."/>
            <person name="Holroyd S."/>
            <person name="Hornsby T."/>
            <person name="Howarth S."/>
            <person name="Huckle E.J."/>
            <person name="Hunt S."/>
            <person name="Jagels K."/>
            <person name="James K.D."/>
            <person name="Jones L."/>
            <person name="Jones M."/>
            <person name="Leather S."/>
            <person name="McDonald S."/>
            <person name="McLean J."/>
            <person name="Mooney P."/>
            <person name="Moule S."/>
            <person name="Mungall K.L."/>
            <person name="Murphy L.D."/>
            <person name="Niblett D."/>
            <person name="Odell C."/>
            <person name="Oliver K."/>
            <person name="O'Neil S."/>
            <person name="Pearson D."/>
            <person name="Quail M.A."/>
            <person name="Rabbinowitsch E."/>
            <person name="Rutherford K.M."/>
            <person name="Rutter S."/>
            <person name="Saunders D."/>
            <person name="Seeger K."/>
            <person name="Sharp S."/>
            <person name="Skelton J."/>
            <person name="Simmonds M.N."/>
            <person name="Squares R."/>
            <person name="Squares S."/>
            <person name="Stevens K."/>
            <person name="Taylor K."/>
            <person name="Taylor R.G."/>
            <person name="Tivey A."/>
            <person name="Walsh S.V."/>
            <person name="Warren T."/>
            <person name="Whitehead S."/>
            <person name="Woodward J.R."/>
            <person name="Volckaert G."/>
            <person name="Aert R."/>
            <person name="Robben J."/>
            <person name="Grymonprez B."/>
            <person name="Weltjens I."/>
            <person name="Vanstreels E."/>
            <person name="Rieger M."/>
            <person name="Schaefer M."/>
            <person name="Mueller-Auer S."/>
            <person name="Gabel C."/>
            <person name="Fuchs M."/>
            <person name="Duesterhoeft A."/>
            <person name="Fritzc C."/>
            <person name="Holzer E."/>
            <person name="Moestl D."/>
            <person name="Hilbert H."/>
            <person name="Borzym K."/>
            <person name="Langer I."/>
            <person name="Beck A."/>
            <person name="Lehrach H."/>
            <person name="Reinhardt R."/>
            <person name="Pohl T.M."/>
            <person name="Eger P."/>
            <person name="Zimmermann W."/>
            <person name="Wedler H."/>
            <person name="Wambutt R."/>
            <person name="Purnelle B."/>
            <person name="Goffeau A."/>
            <person name="Cadieu E."/>
            <person name="Dreano S."/>
            <person name="Gloux S."/>
            <person name="Lelaure V."/>
            <person name="Mottier S."/>
            <person name="Galibert F."/>
            <person name="Aves S.J."/>
            <person name="Xiang Z."/>
            <person name="Hunt C."/>
            <person name="Moore K."/>
            <person name="Hurst S.M."/>
            <person name="Lucas M."/>
            <person name="Rochet M."/>
            <person name="Gaillardin C."/>
            <person name="Tallada V.A."/>
            <person name="Garzon A."/>
            <person name="Thode G."/>
            <person name="Daga R.R."/>
            <person name="Cruzado L."/>
            <person name="Jimenez J."/>
            <person name="Sanchez M."/>
            <person name="del Rey F."/>
            <person name="Benito J."/>
            <person name="Dominguez A."/>
            <person name="Revuelta J.L."/>
            <person name="Moreno S."/>
            <person name="Armstrong J."/>
            <person name="Forsburg S.L."/>
            <person name="Cerutti L."/>
            <person name="Lowe T."/>
            <person name="McCombie W.R."/>
            <person name="Paulsen I."/>
            <person name="Potashkin J."/>
            <person name="Shpakovski G.V."/>
            <person name="Ussery D."/>
            <person name="Barrell B.G."/>
            <person name="Nurse P."/>
        </authorList>
    </citation>
    <scope>NUCLEOTIDE SEQUENCE [LARGE SCALE GENOMIC DNA]</scope>
    <source>
        <strain>972 / ATCC 24843</strain>
    </source>
</reference>
<reference key="2">
    <citation type="journal article" date="2000" name="Genetics">
        <title>Glucose monitoring in fission yeast via the gpa2 Galpha, the git5 Gbeta and the git3 putative glucose receptor.</title>
        <authorList>
            <person name="Welton R.M."/>
            <person name="Hoffman C.S."/>
        </authorList>
    </citation>
    <scope>FUNCTION</scope>
    <scope>SUBUNIT</scope>
</reference>
<reference key="3">
    <citation type="journal article" date="2001" name="Genetics">
        <title>The git5 Gbeta and git11 Ggamma form an atypical Gbetagamma dimer acting in the fission yeast glucose/cAMP pathway.</title>
        <authorList>
            <person name="Landry S."/>
            <person name="Hoffman C.S."/>
        </authorList>
    </citation>
    <scope>FUNCTION</scope>
    <scope>SUBUNIT</scope>
    <scope>SUBCELLULAR LOCATION</scope>
    <scope>DISRUPTION PHENOTYPE</scope>
</reference>
<keyword id="KW-1003">Cell membrane</keyword>
<keyword id="KW-0449">Lipoprotein</keyword>
<keyword id="KW-0472">Membrane</keyword>
<keyword id="KW-0488">Methylation</keyword>
<keyword id="KW-0564">Palmitate</keyword>
<keyword id="KW-0636">Prenylation</keyword>
<keyword id="KW-1185">Reference proteome</keyword>
<keyword id="KW-0807">Transducer</keyword>
<accession>O94309</accession>
<dbReference type="EMBL" id="CU329671">
    <property type="protein sequence ID" value="CAA22118.1"/>
    <property type="molecule type" value="Genomic_DNA"/>
</dbReference>
<dbReference type="PIR" id="T39894">
    <property type="entry name" value="T39894"/>
</dbReference>
<dbReference type="RefSeq" id="NP_596681.1">
    <property type="nucleotide sequence ID" value="NM_001022604.2"/>
</dbReference>
<dbReference type="BioGRID" id="277191">
    <property type="interactions" value="8"/>
</dbReference>
<dbReference type="FunCoup" id="O94309">
    <property type="interactions" value="2"/>
</dbReference>
<dbReference type="STRING" id="284812.O94309"/>
<dbReference type="iPTMnet" id="O94309"/>
<dbReference type="PaxDb" id="4896-SPBC215.04.1"/>
<dbReference type="EnsemblFungi" id="SPBC215.04.1">
    <property type="protein sequence ID" value="SPBC215.04.1:pep"/>
    <property type="gene ID" value="SPBC215.04"/>
</dbReference>
<dbReference type="GeneID" id="2540666"/>
<dbReference type="KEGG" id="spo:2540666"/>
<dbReference type="PomBase" id="SPBC215.04">
    <property type="gene designation" value="git11"/>
</dbReference>
<dbReference type="VEuPathDB" id="FungiDB:SPBC215.04"/>
<dbReference type="HOGENOM" id="CLU_2723639_0_0_1"/>
<dbReference type="InParanoid" id="O94309"/>
<dbReference type="PRO" id="PR:O94309"/>
<dbReference type="Proteomes" id="UP000002485">
    <property type="component" value="Chromosome II"/>
</dbReference>
<dbReference type="GO" id="GO:0005834">
    <property type="term" value="C:heterotrimeric G-protein complex"/>
    <property type="evidence" value="ECO:0000314"/>
    <property type="project" value="PomBase"/>
</dbReference>
<dbReference type="GO" id="GO:0010619">
    <property type="term" value="P:adenylate cyclase-activating glucose-activated G protein-coupled receptor signaling pathway"/>
    <property type="evidence" value="ECO:0000315"/>
    <property type="project" value="PomBase"/>
</dbReference>
<dbReference type="GO" id="GO:0007186">
    <property type="term" value="P:G protein-coupled receptor signaling pathway"/>
    <property type="evidence" value="ECO:0000318"/>
    <property type="project" value="GO_Central"/>
</dbReference>
<dbReference type="GO" id="GO:0010515">
    <property type="term" value="P:negative regulation of induction of conjugation with cellular fusion"/>
    <property type="evidence" value="ECO:0000315"/>
    <property type="project" value="PomBase"/>
</dbReference>
<dbReference type="GO" id="GO:0000122">
    <property type="term" value="P:negative regulation of transcription by RNA polymerase II"/>
    <property type="evidence" value="ECO:0000315"/>
    <property type="project" value="PomBase"/>
</dbReference>
<sequence>METEALLNEKISVQQARQEFANYANNIPEPMMVSVAPPKANPSVSSKTKQQQHFKPGKATKDKATTKCCTIS</sequence>
<comment type="function">
    <text evidence="3 4">Gamma subunit of the heterotrimeric guanine nucleotide-binding protein (G protein) involved in glucose-induced cAMP signaling (PubMed:11014802, PubMed:11238401). The beta-gamma subunits (git5-git11) promote binding of the alpha subunit gpa2 to GPCR git3, which senses extracellular glucose, to activate cAMP-PKA signaling and repress sexual development and gluconeogenesis (PubMed:11014802, PubMed:11238401).</text>
</comment>
<comment type="subunit">
    <text evidence="3 4">G proteins are composed of 3 units, alpha, beta and gamma (PubMed:11238401). Binding of the beta-gamma subunit complex (git5-git11) to the alpha subunit (gpa2) facilitates interaction with GPCR git3 (PubMed:11014802, PubMed:11238401).</text>
</comment>
<comment type="subcellular location">
    <subcellularLocation>
        <location evidence="6">Cell membrane</location>
        <topology evidence="6">Peripheral membrane protein</topology>
        <orientation evidence="6">Cytoplasmic side</orientation>
    </subcellularLocation>
</comment>
<comment type="disruption phenotype">
    <text evidence="4">Leads to starvation-independent sexual development; the effect is suppressed by cAMP.</text>
</comment>
<comment type="similarity">
    <text evidence="5">Belongs to the G protein gamma family.</text>
</comment>
<name>GBG_SCHPO</name>
<proteinExistence type="evidence at protein level"/>
<protein>
    <recommendedName>
        <fullName>Guanine nucleotide-binding protein subunit gamma</fullName>
    </recommendedName>
</protein>